<keyword id="KW-1185">Reference proteome</keyword>
<keyword id="KW-0687">Ribonucleoprotein</keyword>
<keyword id="KW-0690">Ribosome biogenesis</keyword>
<keyword id="KW-0698">rRNA processing</keyword>
<gene>
    <name evidence="1" type="primary">nop10</name>
    <name type="ordered locus">Igni_0764</name>
</gene>
<dbReference type="EMBL" id="CP000816">
    <property type="protein sequence ID" value="ABU81946.1"/>
    <property type="molecule type" value="Genomic_DNA"/>
</dbReference>
<dbReference type="RefSeq" id="WP_012122910.1">
    <property type="nucleotide sequence ID" value="NC_009776.1"/>
</dbReference>
<dbReference type="SMR" id="A8AAJ4"/>
<dbReference type="STRING" id="453591.Igni_0764"/>
<dbReference type="GeneID" id="32154688"/>
<dbReference type="KEGG" id="iho:Igni_0764"/>
<dbReference type="eggNOG" id="arCOG00906">
    <property type="taxonomic scope" value="Archaea"/>
</dbReference>
<dbReference type="HOGENOM" id="CLU_196480_1_0_2"/>
<dbReference type="OrthoDB" id="7259at2157"/>
<dbReference type="PhylomeDB" id="A8AAJ4"/>
<dbReference type="Proteomes" id="UP000000262">
    <property type="component" value="Chromosome"/>
</dbReference>
<dbReference type="GO" id="GO:1990904">
    <property type="term" value="C:ribonucleoprotein complex"/>
    <property type="evidence" value="ECO:0007669"/>
    <property type="project" value="UniProtKB-KW"/>
</dbReference>
<dbReference type="GO" id="GO:0030515">
    <property type="term" value="F:snoRNA binding"/>
    <property type="evidence" value="ECO:0007669"/>
    <property type="project" value="InterPro"/>
</dbReference>
<dbReference type="GO" id="GO:0001522">
    <property type="term" value="P:pseudouridine synthesis"/>
    <property type="evidence" value="ECO:0007669"/>
    <property type="project" value="InterPro"/>
</dbReference>
<dbReference type="GO" id="GO:0006364">
    <property type="term" value="P:rRNA processing"/>
    <property type="evidence" value="ECO:0007669"/>
    <property type="project" value="UniProtKB-UniRule"/>
</dbReference>
<dbReference type="Gene3D" id="2.20.28.40">
    <property type="entry name" value="H/ACA ribonucleoprotein complex, subunit Nop10"/>
    <property type="match status" value="1"/>
</dbReference>
<dbReference type="HAMAP" id="MF_00803">
    <property type="entry name" value="Nop10"/>
    <property type="match status" value="1"/>
</dbReference>
<dbReference type="InterPro" id="IPR007264">
    <property type="entry name" value="H/ACA_rnp_Nop10"/>
</dbReference>
<dbReference type="InterPro" id="IPR036756">
    <property type="entry name" value="H/ACA_rnp_Nop10_sf"/>
</dbReference>
<dbReference type="InterPro" id="IPR023532">
    <property type="entry name" value="Nop10_arc-typ"/>
</dbReference>
<dbReference type="NCBIfam" id="NF009623">
    <property type="entry name" value="PRK13130.1"/>
    <property type="match status" value="1"/>
</dbReference>
<dbReference type="PANTHER" id="PTHR13305:SF0">
    <property type="entry name" value="H_ACA RIBONUCLEOPROTEIN COMPLEX SUBUNIT 3"/>
    <property type="match status" value="1"/>
</dbReference>
<dbReference type="PANTHER" id="PTHR13305">
    <property type="entry name" value="RIBOSOME BIOGENESIS PROTEIN NOP10"/>
    <property type="match status" value="1"/>
</dbReference>
<dbReference type="Pfam" id="PF04135">
    <property type="entry name" value="Nop10p"/>
    <property type="match status" value="1"/>
</dbReference>
<dbReference type="SUPFAM" id="SSF144210">
    <property type="entry name" value="Nop10-like SnoRNP"/>
    <property type="match status" value="1"/>
</dbReference>
<evidence type="ECO:0000255" key="1">
    <source>
        <dbReference type="HAMAP-Rule" id="MF_00803"/>
    </source>
</evidence>
<comment type="function">
    <text evidence="1">Involved in ribosome biogenesis; more specifically in 18S rRNA pseudouridylation and in cleavage of pre-rRNA.</text>
</comment>
<comment type="similarity">
    <text evidence="1">Belongs to the NOP10 family.</text>
</comment>
<sequence>MKFLMKKCVRCGRYTFKDVCPVCNGQTTVPHPPRFSPEDKYVKYRVLAKLTKERPSSEGSTLSS</sequence>
<feature type="chain" id="PRO_1000047024" description="Ribosome biogenesis protein Nop10">
    <location>
        <begin position="1"/>
        <end position="64"/>
    </location>
</feature>
<name>NOP10_IGNH4</name>
<organism>
    <name type="scientific">Ignicoccus hospitalis (strain KIN4/I / DSM 18386 / JCM 14125)</name>
    <dbReference type="NCBI Taxonomy" id="453591"/>
    <lineage>
        <taxon>Archaea</taxon>
        <taxon>Thermoproteota</taxon>
        <taxon>Thermoprotei</taxon>
        <taxon>Desulfurococcales</taxon>
        <taxon>Desulfurococcaceae</taxon>
        <taxon>Ignicoccus</taxon>
    </lineage>
</organism>
<accession>A8AAJ4</accession>
<proteinExistence type="inferred from homology"/>
<reference key="1">
    <citation type="journal article" date="2008" name="Genome Biol.">
        <title>A genomic analysis of the archaeal system Ignicoccus hospitalis-Nanoarchaeum equitans.</title>
        <authorList>
            <person name="Podar M."/>
            <person name="Anderson I."/>
            <person name="Makarova K.S."/>
            <person name="Elkins J.G."/>
            <person name="Ivanova N."/>
            <person name="Wall M.A."/>
            <person name="Lykidis A."/>
            <person name="Mavromatis K."/>
            <person name="Sun H."/>
            <person name="Hudson M.E."/>
            <person name="Chen W."/>
            <person name="Deciu C."/>
            <person name="Hutchison D."/>
            <person name="Eads J.R."/>
            <person name="Anderson A."/>
            <person name="Fernandes F."/>
            <person name="Szeto E."/>
            <person name="Lapidus A."/>
            <person name="Kyrpides N.C."/>
            <person name="Saier M.H. Jr."/>
            <person name="Richardson P.M."/>
            <person name="Rachel R."/>
            <person name="Huber H."/>
            <person name="Eisen J.A."/>
            <person name="Koonin E.V."/>
            <person name="Keller M."/>
            <person name="Stetter K.O."/>
        </authorList>
    </citation>
    <scope>NUCLEOTIDE SEQUENCE [LARGE SCALE GENOMIC DNA]</scope>
    <source>
        <strain>KIN4/I / DSM 18386 / JCM 14125</strain>
    </source>
</reference>
<protein>
    <recommendedName>
        <fullName evidence="1">Ribosome biogenesis protein Nop10</fullName>
    </recommendedName>
</protein>